<protein>
    <recommendedName>
        <fullName evidence="1">Beta-ketoacyl-[acyl-carrier-protein] synthase III</fullName>
        <shortName evidence="1">Beta-ketoacyl-ACP synthase III</shortName>
        <shortName evidence="1">KAS III</shortName>
        <ecNumber evidence="1">2.3.1.180</ecNumber>
    </recommendedName>
    <alternativeName>
        <fullName evidence="1">3-oxoacyl-[acyl-carrier-protein] synthase 3</fullName>
    </alternativeName>
    <alternativeName>
        <fullName evidence="1">3-oxoacyl-[acyl-carrier-protein] synthase III</fullName>
    </alternativeName>
</protein>
<sequence length="322" mass="33876">MRRSVFCGVGAFLPAKVITNDDLSLMVDTTDEWVFRRTGIKRRHVVEEGDTVSCMATEAAKIALEDAGVSATEVDLIIVATATPDKTMPSCATMVQGSLGCKNAAAFDINAACSGFLYALSIVDSMIKAGQANIALIIGSEAMSKVVDWTDRSTCVLFGDGAGAFVFKGQDETEKPGAGVMSTLLCADGSLGNVLYTNGGVASTGKAGYICMKGTVLFEHAVVKLSSAISALLESSALDVDSIDWFIPHQANVRIIDLVINRLGLSRDKVILSIDEHANTSSASIPLAMYEAKRAGRIKKGNLVLFAAIGAGITWGVSLLRL</sequence>
<accession>Q5PA98</accession>
<reference key="1">
    <citation type="journal article" date="2005" name="Proc. Natl. Acad. Sci. U.S.A.">
        <title>Complete genome sequencing of Anaplasma marginale reveals that the surface is skewed to two superfamilies of outer membrane proteins.</title>
        <authorList>
            <person name="Brayton K.A."/>
            <person name="Kappmeyer L.S."/>
            <person name="Herndon D.R."/>
            <person name="Dark M.J."/>
            <person name="Tibbals D.L."/>
            <person name="Palmer G.H."/>
            <person name="McGuire T.C."/>
            <person name="Knowles D.P. Jr."/>
        </authorList>
    </citation>
    <scope>NUCLEOTIDE SEQUENCE [LARGE SCALE GENOMIC DNA]</scope>
    <source>
        <strain>St. Maries</strain>
    </source>
</reference>
<dbReference type="EC" id="2.3.1.180" evidence="1"/>
<dbReference type="EMBL" id="CP000030">
    <property type="protein sequence ID" value="AAV86782.1"/>
    <property type="molecule type" value="Genomic_DNA"/>
</dbReference>
<dbReference type="RefSeq" id="WP_011114469.1">
    <property type="nucleotide sequence ID" value="NZ_AFMU01000035.1"/>
</dbReference>
<dbReference type="SMR" id="Q5PA98"/>
<dbReference type="KEGG" id="ama:AM869"/>
<dbReference type="HOGENOM" id="CLU_039592_3_1_5"/>
<dbReference type="UniPathway" id="UPA00094"/>
<dbReference type="GO" id="GO:0005737">
    <property type="term" value="C:cytoplasm"/>
    <property type="evidence" value="ECO:0007669"/>
    <property type="project" value="UniProtKB-SubCell"/>
</dbReference>
<dbReference type="GO" id="GO:0004315">
    <property type="term" value="F:3-oxoacyl-[acyl-carrier-protein] synthase activity"/>
    <property type="evidence" value="ECO:0007669"/>
    <property type="project" value="InterPro"/>
</dbReference>
<dbReference type="GO" id="GO:0033818">
    <property type="term" value="F:beta-ketoacyl-acyl-carrier-protein synthase III activity"/>
    <property type="evidence" value="ECO:0007669"/>
    <property type="project" value="UniProtKB-UniRule"/>
</dbReference>
<dbReference type="GO" id="GO:0006633">
    <property type="term" value="P:fatty acid biosynthetic process"/>
    <property type="evidence" value="ECO:0007669"/>
    <property type="project" value="UniProtKB-UniRule"/>
</dbReference>
<dbReference type="GO" id="GO:0044550">
    <property type="term" value="P:secondary metabolite biosynthetic process"/>
    <property type="evidence" value="ECO:0007669"/>
    <property type="project" value="TreeGrafter"/>
</dbReference>
<dbReference type="CDD" id="cd00830">
    <property type="entry name" value="KAS_III"/>
    <property type="match status" value="1"/>
</dbReference>
<dbReference type="FunFam" id="3.40.47.10:FF:000004">
    <property type="entry name" value="3-oxoacyl-[acyl-carrier-protein] synthase 3"/>
    <property type="match status" value="1"/>
</dbReference>
<dbReference type="Gene3D" id="3.40.47.10">
    <property type="match status" value="1"/>
</dbReference>
<dbReference type="HAMAP" id="MF_01815">
    <property type="entry name" value="FabH"/>
    <property type="match status" value="1"/>
</dbReference>
<dbReference type="InterPro" id="IPR013747">
    <property type="entry name" value="ACP_syn_III_C"/>
</dbReference>
<dbReference type="InterPro" id="IPR013751">
    <property type="entry name" value="ACP_syn_III_N"/>
</dbReference>
<dbReference type="InterPro" id="IPR004655">
    <property type="entry name" value="FabH"/>
</dbReference>
<dbReference type="InterPro" id="IPR016039">
    <property type="entry name" value="Thiolase-like"/>
</dbReference>
<dbReference type="NCBIfam" id="TIGR00747">
    <property type="entry name" value="fabH"/>
    <property type="match status" value="1"/>
</dbReference>
<dbReference type="NCBIfam" id="NF006829">
    <property type="entry name" value="PRK09352.1"/>
    <property type="match status" value="1"/>
</dbReference>
<dbReference type="PANTHER" id="PTHR34069">
    <property type="entry name" value="3-OXOACYL-[ACYL-CARRIER-PROTEIN] SYNTHASE 3"/>
    <property type="match status" value="1"/>
</dbReference>
<dbReference type="PANTHER" id="PTHR34069:SF2">
    <property type="entry name" value="BETA-KETOACYL-[ACYL-CARRIER-PROTEIN] SYNTHASE III"/>
    <property type="match status" value="1"/>
</dbReference>
<dbReference type="Pfam" id="PF08545">
    <property type="entry name" value="ACP_syn_III"/>
    <property type="match status" value="1"/>
</dbReference>
<dbReference type="Pfam" id="PF08541">
    <property type="entry name" value="ACP_syn_III_C"/>
    <property type="match status" value="1"/>
</dbReference>
<dbReference type="SUPFAM" id="SSF53901">
    <property type="entry name" value="Thiolase-like"/>
    <property type="match status" value="1"/>
</dbReference>
<evidence type="ECO:0000255" key="1">
    <source>
        <dbReference type="HAMAP-Rule" id="MF_01815"/>
    </source>
</evidence>
<proteinExistence type="inferred from homology"/>
<keyword id="KW-0012">Acyltransferase</keyword>
<keyword id="KW-0963">Cytoplasm</keyword>
<keyword id="KW-0275">Fatty acid biosynthesis</keyword>
<keyword id="KW-0276">Fatty acid metabolism</keyword>
<keyword id="KW-0444">Lipid biosynthesis</keyword>
<keyword id="KW-0443">Lipid metabolism</keyword>
<keyword id="KW-0511">Multifunctional enzyme</keyword>
<keyword id="KW-0808">Transferase</keyword>
<feature type="chain" id="PRO_1000056322" description="Beta-ketoacyl-[acyl-carrier-protein] synthase III">
    <location>
        <begin position="1"/>
        <end position="322"/>
    </location>
</feature>
<feature type="region of interest" description="ACP-binding" evidence="1">
    <location>
        <begin position="250"/>
        <end position="254"/>
    </location>
</feature>
<feature type="active site" evidence="1">
    <location>
        <position position="113"/>
    </location>
</feature>
<feature type="active site" evidence="1">
    <location>
        <position position="249"/>
    </location>
</feature>
<feature type="active site" evidence="1">
    <location>
        <position position="279"/>
    </location>
</feature>
<comment type="function">
    <text evidence="1">Catalyzes the condensation reaction of fatty acid synthesis by the addition to an acyl acceptor of two carbons from malonyl-ACP. Catalyzes the first condensation reaction which initiates fatty acid synthesis and may therefore play a role in governing the total rate of fatty acid production. Possesses both acetoacetyl-ACP synthase and acetyl transacylase activities. Its substrate specificity determines the biosynthesis of branched-chain and/or straight-chain of fatty acids.</text>
</comment>
<comment type="catalytic activity">
    <reaction evidence="1">
        <text>malonyl-[ACP] + acetyl-CoA + H(+) = 3-oxobutanoyl-[ACP] + CO2 + CoA</text>
        <dbReference type="Rhea" id="RHEA:12080"/>
        <dbReference type="Rhea" id="RHEA-COMP:9623"/>
        <dbReference type="Rhea" id="RHEA-COMP:9625"/>
        <dbReference type="ChEBI" id="CHEBI:15378"/>
        <dbReference type="ChEBI" id="CHEBI:16526"/>
        <dbReference type="ChEBI" id="CHEBI:57287"/>
        <dbReference type="ChEBI" id="CHEBI:57288"/>
        <dbReference type="ChEBI" id="CHEBI:78449"/>
        <dbReference type="ChEBI" id="CHEBI:78450"/>
        <dbReference type="EC" id="2.3.1.180"/>
    </reaction>
</comment>
<comment type="pathway">
    <text evidence="1">Lipid metabolism; fatty acid biosynthesis.</text>
</comment>
<comment type="subunit">
    <text evidence="1">Homodimer.</text>
</comment>
<comment type="subcellular location">
    <subcellularLocation>
        <location evidence="1">Cytoplasm</location>
    </subcellularLocation>
</comment>
<comment type="domain">
    <text evidence="1">The last Arg residue of the ACP-binding site is essential for the weak association between ACP/AcpP and FabH.</text>
</comment>
<comment type="similarity">
    <text evidence="1">Belongs to the thiolase-like superfamily. FabH family.</text>
</comment>
<name>FABH_ANAMM</name>
<gene>
    <name evidence="1" type="primary">fabH</name>
    <name type="ordered locus">AM869</name>
</gene>
<organism>
    <name type="scientific">Anaplasma marginale (strain St. Maries)</name>
    <dbReference type="NCBI Taxonomy" id="234826"/>
    <lineage>
        <taxon>Bacteria</taxon>
        <taxon>Pseudomonadati</taxon>
        <taxon>Pseudomonadota</taxon>
        <taxon>Alphaproteobacteria</taxon>
        <taxon>Rickettsiales</taxon>
        <taxon>Anaplasmataceae</taxon>
        <taxon>Anaplasma</taxon>
    </lineage>
</organism>